<name>EFTU_STRP4</name>
<sequence length="398" mass="43971">MAKEKYDRSKPHVNIGTIGHVDHGKTTLTAAITTVLARRLPSSVNQPKDYASIDAAPEERERGITINTAHVEYETEKRHYAHIDAPGHADYVKNMITGAAQMDGAILVVASTDGPMPQTREHILLSRQVGVKHLIVFMNKVDLVDDEELLELVEMEIRDLLSEYDFPGDDLPVIQGSALKALEGDSKYEDIVMELMNTVDEYIPEPERDTDKPLLLPVEDVFSITGRGTVASGRIDRGIVKVNDEIEIVGIKEETQKAVVTGVEMFRKQLDEGLAGDNVGVLLRGVQRDEIERGQVIAKPGSINPHTKFKGEVYILTKEEGGRHTPFFNNYRPQFYFRTTDVTGSIELPAGTEMVMPGDNVTIDVELIHPIAVEQGTTFSIREGGRTVGSGMVTEIEA</sequence>
<gene>
    <name evidence="2" type="primary">tuf</name>
    <name type="ordered locus">SPG_1413</name>
</gene>
<evidence type="ECO:0000250" key="1"/>
<evidence type="ECO:0000255" key="2">
    <source>
        <dbReference type="HAMAP-Rule" id="MF_00118"/>
    </source>
</evidence>
<comment type="function">
    <text evidence="2">GTP hydrolase that promotes the GTP-dependent binding of aminoacyl-tRNA to the A-site of ribosomes during protein biosynthesis.</text>
</comment>
<comment type="catalytic activity">
    <reaction evidence="2">
        <text>GTP + H2O = GDP + phosphate + H(+)</text>
        <dbReference type="Rhea" id="RHEA:19669"/>
        <dbReference type="ChEBI" id="CHEBI:15377"/>
        <dbReference type="ChEBI" id="CHEBI:15378"/>
        <dbReference type="ChEBI" id="CHEBI:37565"/>
        <dbReference type="ChEBI" id="CHEBI:43474"/>
        <dbReference type="ChEBI" id="CHEBI:58189"/>
        <dbReference type="EC" id="3.6.5.3"/>
    </reaction>
    <physiologicalReaction direction="left-to-right" evidence="2">
        <dbReference type="Rhea" id="RHEA:19670"/>
    </physiologicalReaction>
</comment>
<comment type="subunit">
    <text evidence="2">Monomer.</text>
</comment>
<comment type="subcellular location">
    <subcellularLocation>
        <location evidence="2">Cytoplasm</location>
    </subcellularLocation>
</comment>
<comment type="similarity">
    <text evidence="2">Belongs to the TRAFAC class translation factor GTPase superfamily. Classic translation factor GTPase family. EF-Tu/EF-1A subfamily.</text>
</comment>
<keyword id="KW-0963">Cytoplasm</keyword>
<keyword id="KW-0251">Elongation factor</keyword>
<keyword id="KW-0342">GTP-binding</keyword>
<keyword id="KW-0378">Hydrolase</keyword>
<keyword id="KW-0460">Magnesium</keyword>
<keyword id="KW-0479">Metal-binding</keyword>
<keyword id="KW-0547">Nucleotide-binding</keyword>
<keyword id="KW-0648">Protein biosynthesis</keyword>
<organism>
    <name type="scientific">Streptococcus pneumoniae serotype 19F (strain G54)</name>
    <dbReference type="NCBI Taxonomy" id="512566"/>
    <lineage>
        <taxon>Bacteria</taxon>
        <taxon>Bacillati</taxon>
        <taxon>Bacillota</taxon>
        <taxon>Bacilli</taxon>
        <taxon>Lactobacillales</taxon>
        <taxon>Streptococcaceae</taxon>
        <taxon>Streptococcus</taxon>
    </lineage>
</organism>
<dbReference type="EC" id="3.6.5.3" evidence="2"/>
<dbReference type="EMBL" id="CP001015">
    <property type="protein sequence ID" value="ACF54925.1"/>
    <property type="molecule type" value="Genomic_DNA"/>
</dbReference>
<dbReference type="SMR" id="B5E653"/>
<dbReference type="KEGG" id="spx:SPG_1413"/>
<dbReference type="HOGENOM" id="CLU_007265_0_1_9"/>
<dbReference type="GO" id="GO:0005829">
    <property type="term" value="C:cytosol"/>
    <property type="evidence" value="ECO:0007669"/>
    <property type="project" value="TreeGrafter"/>
</dbReference>
<dbReference type="GO" id="GO:0005525">
    <property type="term" value="F:GTP binding"/>
    <property type="evidence" value="ECO:0007669"/>
    <property type="project" value="UniProtKB-UniRule"/>
</dbReference>
<dbReference type="GO" id="GO:0003924">
    <property type="term" value="F:GTPase activity"/>
    <property type="evidence" value="ECO:0007669"/>
    <property type="project" value="InterPro"/>
</dbReference>
<dbReference type="GO" id="GO:0003746">
    <property type="term" value="F:translation elongation factor activity"/>
    <property type="evidence" value="ECO:0007669"/>
    <property type="project" value="UniProtKB-UniRule"/>
</dbReference>
<dbReference type="CDD" id="cd01884">
    <property type="entry name" value="EF_Tu"/>
    <property type="match status" value="1"/>
</dbReference>
<dbReference type="CDD" id="cd03697">
    <property type="entry name" value="EFTU_II"/>
    <property type="match status" value="1"/>
</dbReference>
<dbReference type="CDD" id="cd03707">
    <property type="entry name" value="EFTU_III"/>
    <property type="match status" value="1"/>
</dbReference>
<dbReference type="FunFam" id="2.40.30.10:FF:000001">
    <property type="entry name" value="Elongation factor Tu"/>
    <property type="match status" value="1"/>
</dbReference>
<dbReference type="FunFam" id="3.40.50.300:FF:000003">
    <property type="entry name" value="Elongation factor Tu"/>
    <property type="match status" value="1"/>
</dbReference>
<dbReference type="Gene3D" id="3.40.50.300">
    <property type="entry name" value="P-loop containing nucleotide triphosphate hydrolases"/>
    <property type="match status" value="1"/>
</dbReference>
<dbReference type="Gene3D" id="2.40.30.10">
    <property type="entry name" value="Translation factors"/>
    <property type="match status" value="2"/>
</dbReference>
<dbReference type="HAMAP" id="MF_00118_B">
    <property type="entry name" value="EF_Tu_B"/>
    <property type="match status" value="1"/>
</dbReference>
<dbReference type="InterPro" id="IPR041709">
    <property type="entry name" value="EF-Tu_GTP-bd"/>
</dbReference>
<dbReference type="InterPro" id="IPR050055">
    <property type="entry name" value="EF-Tu_GTPase"/>
</dbReference>
<dbReference type="InterPro" id="IPR004161">
    <property type="entry name" value="EFTu-like_2"/>
</dbReference>
<dbReference type="InterPro" id="IPR033720">
    <property type="entry name" value="EFTU_2"/>
</dbReference>
<dbReference type="InterPro" id="IPR031157">
    <property type="entry name" value="G_TR_CS"/>
</dbReference>
<dbReference type="InterPro" id="IPR027417">
    <property type="entry name" value="P-loop_NTPase"/>
</dbReference>
<dbReference type="InterPro" id="IPR005225">
    <property type="entry name" value="Small_GTP-bd"/>
</dbReference>
<dbReference type="InterPro" id="IPR000795">
    <property type="entry name" value="T_Tr_GTP-bd_dom"/>
</dbReference>
<dbReference type="InterPro" id="IPR009000">
    <property type="entry name" value="Transl_B-barrel_sf"/>
</dbReference>
<dbReference type="InterPro" id="IPR009001">
    <property type="entry name" value="Transl_elong_EF1A/Init_IF2_C"/>
</dbReference>
<dbReference type="InterPro" id="IPR004541">
    <property type="entry name" value="Transl_elong_EFTu/EF1A_bac/org"/>
</dbReference>
<dbReference type="InterPro" id="IPR004160">
    <property type="entry name" value="Transl_elong_EFTu/EF1A_C"/>
</dbReference>
<dbReference type="NCBIfam" id="TIGR00485">
    <property type="entry name" value="EF-Tu"/>
    <property type="match status" value="1"/>
</dbReference>
<dbReference type="NCBIfam" id="NF000766">
    <property type="entry name" value="PRK00049.1"/>
    <property type="match status" value="1"/>
</dbReference>
<dbReference type="NCBIfam" id="NF009372">
    <property type="entry name" value="PRK12735.1"/>
    <property type="match status" value="1"/>
</dbReference>
<dbReference type="NCBIfam" id="NF009373">
    <property type="entry name" value="PRK12736.1"/>
    <property type="match status" value="1"/>
</dbReference>
<dbReference type="NCBIfam" id="TIGR00231">
    <property type="entry name" value="small_GTP"/>
    <property type="match status" value="1"/>
</dbReference>
<dbReference type="PANTHER" id="PTHR43721:SF22">
    <property type="entry name" value="ELONGATION FACTOR TU, MITOCHONDRIAL"/>
    <property type="match status" value="1"/>
</dbReference>
<dbReference type="PANTHER" id="PTHR43721">
    <property type="entry name" value="ELONGATION FACTOR TU-RELATED"/>
    <property type="match status" value="1"/>
</dbReference>
<dbReference type="Pfam" id="PF00009">
    <property type="entry name" value="GTP_EFTU"/>
    <property type="match status" value="1"/>
</dbReference>
<dbReference type="Pfam" id="PF03144">
    <property type="entry name" value="GTP_EFTU_D2"/>
    <property type="match status" value="1"/>
</dbReference>
<dbReference type="Pfam" id="PF03143">
    <property type="entry name" value="GTP_EFTU_D3"/>
    <property type="match status" value="1"/>
</dbReference>
<dbReference type="PRINTS" id="PR00315">
    <property type="entry name" value="ELONGATNFCT"/>
</dbReference>
<dbReference type="SUPFAM" id="SSF50465">
    <property type="entry name" value="EF-Tu/eEF-1alpha/eIF2-gamma C-terminal domain"/>
    <property type="match status" value="1"/>
</dbReference>
<dbReference type="SUPFAM" id="SSF52540">
    <property type="entry name" value="P-loop containing nucleoside triphosphate hydrolases"/>
    <property type="match status" value="1"/>
</dbReference>
<dbReference type="SUPFAM" id="SSF50447">
    <property type="entry name" value="Translation proteins"/>
    <property type="match status" value="1"/>
</dbReference>
<dbReference type="PROSITE" id="PS00301">
    <property type="entry name" value="G_TR_1"/>
    <property type="match status" value="1"/>
</dbReference>
<dbReference type="PROSITE" id="PS51722">
    <property type="entry name" value="G_TR_2"/>
    <property type="match status" value="1"/>
</dbReference>
<proteinExistence type="inferred from homology"/>
<feature type="chain" id="PRO_1000095090" description="Elongation factor Tu">
    <location>
        <begin position="1"/>
        <end position="398"/>
    </location>
</feature>
<feature type="domain" description="tr-type G">
    <location>
        <begin position="10"/>
        <end position="207"/>
    </location>
</feature>
<feature type="region of interest" description="G1" evidence="1">
    <location>
        <begin position="19"/>
        <end position="26"/>
    </location>
</feature>
<feature type="region of interest" description="G2" evidence="1">
    <location>
        <begin position="63"/>
        <end position="67"/>
    </location>
</feature>
<feature type="region of interest" description="G3" evidence="1">
    <location>
        <begin position="84"/>
        <end position="87"/>
    </location>
</feature>
<feature type="region of interest" description="G4" evidence="1">
    <location>
        <begin position="139"/>
        <end position="142"/>
    </location>
</feature>
<feature type="region of interest" description="G5" evidence="1">
    <location>
        <begin position="177"/>
        <end position="179"/>
    </location>
</feature>
<feature type="binding site" evidence="2">
    <location>
        <begin position="19"/>
        <end position="26"/>
    </location>
    <ligand>
        <name>GTP</name>
        <dbReference type="ChEBI" id="CHEBI:37565"/>
    </ligand>
</feature>
<feature type="binding site" evidence="2">
    <location>
        <position position="26"/>
    </location>
    <ligand>
        <name>Mg(2+)</name>
        <dbReference type="ChEBI" id="CHEBI:18420"/>
    </ligand>
</feature>
<feature type="binding site" evidence="2">
    <location>
        <begin position="84"/>
        <end position="88"/>
    </location>
    <ligand>
        <name>GTP</name>
        <dbReference type="ChEBI" id="CHEBI:37565"/>
    </ligand>
</feature>
<feature type="binding site" evidence="2">
    <location>
        <begin position="139"/>
        <end position="142"/>
    </location>
    <ligand>
        <name>GTP</name>
        <dbReference type="ChEBI" id="CHEBI:37565"/>
    </ligand>
</feature>
<accession>B5E653</accession>
<reference key="1">
    <citation type="journal article" date="2001" name="Microb. Drug Resist.">
        <title>Annotated draft genomic sequence from a Streptococcus pneumoniae type 19F clinical isolate.</title>
        <authorList>
            <person name="Dopazo J."/>
            <person name="Mendoza A."/>
            <person name="Herrero J."/>
            <person name="Caldara F."/>
            <person name="Humbert Y."/>
            <person name="Friedli L."/>
            <person name="Guerrier M."/>
            <person name="Grand-Schenk E."/>
            <person name="Gandin C."/>
            <person name="de Francesco M."/>
            <person name="Polissi A."/>
            <person name="Buell G."/>
            <person name="Feger G."/>
            <person name="Garcia E."/>
            <person name="Peitsch M."/>
            <person name="Garcia-Bustos J.F."/>
        </authorList>
    </citation>
    <scope>NUCLEOTIDE SEQUENCE [LARGE SCALE GENOMIC DNA]</scope>
    <source>
        <strain>G54</strain>
    </source>
</reference>
<reference key="2">
    <citation type="submission" date="2008-03" db="EMBL/GenBank/DDBJ databases">
        <title>Pneumococcal beta glucoside metabolism investigated by whole genome comparison.</title>
        <authorList>
            <person name="Mulas L."/>
            <person name="Trappetti C."/>
            <person name="Hakenbeck R."/>
            <person name="Iannelli F."/>
            <person name="Pozzi G."/>
            <person name="Davidsen T.M."/>
            <person name="Tettelin H."/>
            <person name="Oggioni M."/>
        </authorList>
    </citation>
    <scope>NUCLEOTIDE SEQUENCE [LARGE SCALE GENOMIC DNA]</scope>
    <source>
        <strain>G54</strain>
    </source>
</reference>
<protein>
    <recommendedName>
        <fullName evidence="2">Elongation factor Tu</fullName>
        <shortName evidence="2">EF-Tu</shortName>
        <ecNumber evidence="2">3.6.5.3</ecNumber>
    </recommendedName>
</protein>